<sequence length="50" mass="6613">MARYRCCRSQSRSRCCRPRRRCRRRRRRSCRARRRATRCCRRRYRLSRRY</sequence>
<dbReference type="EMBL" id="AF294858">
    <property type="protein sequence ID" value="AAM68941.1"/>
    <property type="molecule type" value="Genomic_DNA"/>
</dbReference>
<dbReference type="EMBL" id="AF294859">
    <property type="protein sequence ID" value="AAM68942.1"/>
    <property type="molecule type" value="Genomic_DNA"/>
</dbReference>
<dbReference type="EMBL" id="AF294860">
    <property type="protein sequence ID" value="AAM68943.1"/>
    <property type="molecule type" value="Genomic_DNA"/>
</dbReference>
<dbReference type="GO" id="GO:0000786">
    <property type="term" value="C:nucleosome"/>
    <property type="evidence" value="ECO:0007669"/>
    <property type="project" value="UniProtKB-KW"/>
</dbReference>
<dbReference type="GO" id="GO:0005634">
    <property type="term" value="C:nucleus"/>
    <property type="evidence" value="ECO:0007669"/>
    <property type="project" value="UniProtKB-SubCell"/>
</dbReference>
<dbReference type="GO" id="GO:0003677">
    <property type="term" value="F:DNA binding"/>
    <property type="evidence" value="ECO:0007669"/>
    <property type="project" value="UniProtKB-KW"/>
</dbReference>
<dbReference type="GO" id="GO:0030261">
    <property type="term" value="P:chromosome condensation"/>
    <property type="evidence" value="ECO:0007669"/>
    <property type="project" value="UniProtKB-KW"/>
</dbReference>
<dbReference type="GO" id="GO:0035092">
    <property type="term" value="P:sperm DNA condensation"/>
    <property type="evidence" value="ECO:0007669"/>
    <property type="project" value="InterPro"/>
</dbReference>
<dbReference type="InterPro" id="IPR000221">
    <property type="entry name" value="Protamine_P1"/>
</dbReference>
<dbReference type="Pfam" id="PF00260">
    <property type="entry name" value="Protamine_P1"/>
    <property type="match status" value="1"/>
</dbReference>
<dbReference type="PROSITE" id="PS00048">
    <property type="entry name" value="PROTAMINE_P1"/>
    <property type="match status" value="1"/>
</dbReference>
<reference key="1">
    <citation type="submission" date="2000-08" db="EMBL/GenBank/DDBJ databases">
        <title>Molecular systematics of the langurs.</title>
        <authorList>
            <person name="Karanth P.K."/>
            <person name="Singh L."/>
            <person name="Stewart C.-B."/>
        </authorList>
    </citation>
    <scope>NUCLEOTIDE SEQUENCE [GENOMIC DNA]</scope>
    <source>
        <strain>Isolate I1</strain>
        <strain>Isolate I2</strain>
        <strain>Isolate V1</strain>
    </source>
</reference>
<keyword id="KW-0158">Chromosome</keyword>
<keyword id="KW-0217">Developmental protein</keyword>
<keyword id="KW-0221">Differentiation</keyword>
<keyword id="KW-0226">DNA condensation</keyword>
<keyword id="KW-0238">DNA-binding</keyword>
<keyword id="KW-0544">Nucleosome core</keyword>
<keyword id="KW-0539">Nucleus</keyword>
<keyword id="KW-0744">Spermatogenesis</keyword>
<organism>
    <name type="scientific">Trachypithecus phayrei</name>
    <name type="common">Phayre's leaf monkey</name>
    <dbReference type="NCBI Taxonomy" id="61618"/>
    <lineage>
        <taxon>Eukaryota</taxon>
        <taxon>Metazoa</taxon>
        <taxon>Chordata</taxon>
        <taxon>Craniata</taxon>
        <taxon>Vertebrata</taxon>
        <taxon>Euteleostomi</taxon>
        <taxon>Mammalia</taxon>
        <taxon>Eutheria</taxon>
        <taxon>Euarchontoglires</taxon>
        <taxon>Primates</taxon>
        <taxon>Haplorrhini</taxon>
        <taxon>Catarrhini</taxon>
        <taxon>Cercopithecidae</taxon>
        <taxon>Colobinae</taxon>
        <taxon>Trachypithecus</taxon>
    </lineage>
</organism>
<evidence type="ECO:0000250" key="1"/>
<evidence type="ECO:0000305" key="2"/>
<comment type="function">
    <text evidence="1">Protamines substitute for histones in the chromatin of sperm during the haploid phase of spermatogenesis. They compact sperm DNA into a highly condensed, stable and inactive complex (By similarity).</text>
</comment>
<comment type="subcellular location">
    <subcellularLocation>
        <location evidence="1">Nucleus</location>
    </subcellularLocation>
    <subcellularLocation>
        <location evidence="1">Chromosome</location>
    </subcellularLocation>
</comment>
<comment type="tissue specificity">
    <text>Testis.</text>
</comment>
<comment type="similarity">
    <text evidence="2">Belongs to the protamine P1 family.</text>
</comment>
<protein>
    <recommendedName>
        <fullName>Sperm protamine P1</fullName>
    </recommendedName>
</protein>
<gene>
    <name type="primary">PRM1</name>
</gene>
<proteinExistence type="evidence at transcript level"/>
<name>HSP1_TRAPH</name>
<accession>Q8MHZ2</accession>
<feature type="chain" id="PRO_0000191584" description="Sperm protamine P1">
    <location>
        <begin position="1"/>
        <end position="50"/>
    </location>
</feature>